<organism>
    <name type="scientific">Tityus stigmurus</name>
    <name type="common">Brazilian scorpion</name>
    <dbReference type="NCBI Taxonomy" id="50344"/>
    <lineage>
        <taxon>Eukaryota</taxon>
        <taxon>Metazoa</taxon>
        <taxon>Ecdysozoa</taxon>
        <taxon>Arthropoda</taxon>
        <taxon>Chelicerata</taxon>
        <taxon>Arachnida</taxon>
        <taxon>Scorpiones</taxon>
        <taxon>Buthida</taxon>
        <taxon>Buthoidea</taxon>
        <taxon>Buthidae</taxon>
        <taxon>Tityus</taxon>
    </lineage>
</organism>
<accession>P0C8X6</accession>
<name>KAXUB_TITST</name>
<comment type="function">
    <text evidence="4">May block voltage-gated potassium channels (Kv).</text>
</comment>
<comment type="subcellular location">
    <subcellularLocation>
        <location evidence="2">Secreted</location>
    </subcellularLocation>
</comment>
<comment type="tissue specificity">
    <text evidence="5">Expressed by the venom gland.</text>
</comment>
<comment type="PTM">
    <text evidence="4">Contains 3 disulfide bonds.</text>
</comment>
<comment type="mass spectrometry" mass="2412.0" method="Electrospray" evidence="2"/>
<comment type="similarity">
    <text evidence="4">Belongs to the short scorpion toxin superfamily. Potassium channel inhibitor family.</text>
</comment>
<proteinExistence type="evidence at protein level"/>
<feature type="peptide" id="PRO_0000366115" description="Peptide 2412" evidence="2">
    <location>
        <begin position="1"/>
        <end position="23"/>
    </location>
</feature>
<feature type="modified residue" description="Tyrosine amide" evidence="1">
    <location>
        <position position="23"/>
    </location>
</feature>
<dbReference type="GO" id="GO:0005576">
    <property type="term" value="C:extracellular region"/>
    <property type="evidence" value="ECO:0007669"/>
    <property type="project" value="UniProtKB-SubCell"/>
</dbReference>
<dbReference type="GO" id="GO:0015459">
    <property type="term" value="F:potassium channel regulator activity"/>
    <property type="evidence" value="ECO:0007669"/>
    <property type="project" value="UniProtKB-KW"/>
</dbReference>
<dbReference type="GO" id="GO:0090729">
    <property type="term" value="F:toxin activity"/>
    <property type="evidence" value="ECO:0007669"/>
    <property type="project" value="UniProtKB-KW"/>
</dbReference>
<protein>
    <recommendedName>
        <fullName evidence="3">Peptide 2412</fullName>
    </recommendedName>
    <alternativeName>
        <fullName evidence="4">Potassium channel toxin alpha-KTx</fullName>
    </alternativeName>
</protein>
<evidence type="ECO:0000250" key="1"/>
<evidence type="ECO:0000269" key="2">
    <source>
    </source>
</evidence>
<evidence type="ECO:0000303" key="3">
    <source>
    </source>
</evidence>
<evidence type="ECO:0000305" key="4"/>
<evidence type="ECO:0000305" key="5">
    <source>
    </source>
</evidence>
<keyword id="KW-0027">Amidation</keyword>
<keyword id="KW-0903">Direct protein sequencing</keyword>
<keyword id="KW-1015">Disulfide bond</keyword>
<keyword id="KW-0872">Ion channel impairing toxin</keyword>
<keyword id="KW-0528">Neurotoxin</keyword>
<keyword id="KW-0632">Potassium channel impairing toxin</keyword>
<keyword id="KW-0964">Secreted</keyword>
<keyword id="KW-0800">Toxin</keyword>
<keyword id="KW-1220">Voltage-gated potassium channel impairing toxin</keyword>
<reference key="1">
    <citation type="journal article" date="2007" name="Comp. Biochem. Physiol.">
        <title>Proteomic analysis of the venom from the scorpion Tityus stigmurus: biochemical and physiological comparison with other Tityus species.</title>
        <authorList>
            <person name="Batista C.V.F."/>
            <person name="Roman-Gonzalez S.A."/>
            <person name="Salas-Castillo S.P."/>
            <person name="Zamudio F.Z."/>
            <person name="Gomez-Lagunas F."/>
            <person name="Possani L.D."/>
        </authorList>
    </citation>
    <scope>PROTEIN SEQUENCE</scope>
    <scope>SUBCELLULAR LOCATION</scope>
    <scope>MASS SPECTROMETRY</scope>
    <source>
        <tissue>Venom</tissue>
    </source>
</reference>
<sequence length="23" mass="2418">GCRQCGGGCNKHGKCINGKCKCY</sequence>